<feature type="chain" id="PRO_0000219882" description="O-phosphoseryl-tRNA(Sec) selenium transferase">
    <location>
        <begin position="1"/>
        <end position="431"/>
    </location>
</feature>
<feature type="region of interest" description="Tetramerization" evidence="3">
    <location>
        <begin position="1"/>
        <end position="36"/>
    </location>
</feature>
<feature type="region of interest" description="Phosphate loop (P-loop)" evidence="3">
    <location>
        <begin position="88"/>
        <end position="98"/>
    </location>
</feature>
<feature type="binding site" evidence="2">
    <location>
        <position position="67"/>
    </location>
    <ligand>
        <name>pyridoxal 5'-phosphate</name>
        <dbReference type="ChEBI" id="CHEBI:597326"/>
    </ligand>
</feature>
<feature type="binding site" evidence="2">
    <location>
        <position position="89"/>
    </location>
    <ligand>
        <name>substrate</name>
    </ligand>
</feature>
<feature type="binding site" evidence="2">
    <location>
        <position position="90"/>
    </location>
    <ligand>
        <name>substrate</name>
    </ligand>
</feature>
<feature type="binding site" evidence="2">
    <location>
        <position position="97"/>
    </location>
    <ligand>
        <name>substrate</name>
    </ligand>
</feature>
<feature type="binding site" evidence="2">
    <location>
        <position position="298"/>
    </location>
    <ligand>
        <name>substrate</name>
    </ligand>
</feature>
<feature type="site" description="May act as a substrate filter by repelling compounds with a negatively charged alpha-carboxylate" evidence="1">
    <location>
        <position position="66"/>
    </location>
</feature>
<feature type="modified residue" description="N6-(pyridoxal phosphate)lysine" evidence="2">
    <location>
        <position position="269"/>
    </location>
</feature>
<proteinExistence type="inferred from homology"/>
<protein>
    <recommendedName>
        <fullName>O-phosphoseryl-tRNA(Sec) selenium transferase</fullName>
        <ecNumber evidence="2">2.9.1.2</ecNumber>
    </recommendedName>
    <alternativeName>
        <fullName>Selenocysteine synthase</fullName>
        <shortName>Sec synthase</shortName>
    </alternativeName>
    <alternativeName>
        <fullName>Selenocysteinyl-tRNA(Sec) synthase</fullName>
    </alternativeName>
    <alternativeName>
        <fullName>Sep-tRNA:Sec-tRNA synthase</fullName>
        <shortName>SepSecS</shortName>
    </alternativeName>
</protein>
<dbReference type="EC" id="2.9.1.2" evidence="2"/>
<dbReference type="EMBL" id="AE009439">
    <property type="protein sequence ID" value="AAM01887.1"/>
    <property type="molecule type" value="Genomic_DNA"/>
</dbReference>
<dbReference type="RefSeq" id="WP_011019042.1">
    <property type="nucleotide sequence ID" value="NC_003551.1"/>
</dbReference>
<dbReference type="SMR" id="Q8TXK0"/>
<dbReference type="FunCoup" id="Q8TXK0">
    <property type="interactions" value="87"/>
</dbReference>
<dbReference type="STRING" id="190192.MK0672"/>
<dbReference type="PaxDb" id="190192-MK0672"/>
<dbReference type="EnsemblBacteria" id="AAM01887">
    <property type="protein sequence ID" value="AAM01887"/>
    <property type="gene ID" value="MK0672"/>
</dbReference>
<dbReference type="GeneID" id="1476773"/>
<dbReference type="KEGG" id="mka:MK0672"/>
<dbReference type="PATRIC" id="fig|190192.8.peg.710"/>
<dbReference type="HOGENOM" id="CLU_022508_0_0_2"/>
<dbReference type="InParanoid" id="Q8TXK0"/>
<dbReference type="OrthoDB" id="64344at2157"/>
<dbReference type="UniPathway" id="UPA00906">
    <property type="reaction ID" value="UER00898"/>
</dbReference>
<dbReference type="Proteomes" id="UP000001826">
    <property type="component" value="Chromosome"/>
</dbReference>
<dbReference type="GO" id="GO:0098621">
    <property type="term" value="F:O-phosphoseryl-tRNA(Sec) selenium transferase activity"/>
    <property type="evidence" value="ECO:0007669"/>
    <property type="project" value="UniProtKB-EC"/>
</dbReference>
<dbReference type="GO" id="GO:0000049">
    <property type="term" value="F:tRNA binding"/>
    <property type="evidence" value="ECO:0007669"/>
    <property type="project" value="UniProtKB-KW"/>
</dbReference>
<dbReference type="GO" id="GO:0001717">
    <property type="term" value="P:conversion of seryl-tRNAsec to selenocys-tRNAsec"/>
    <property type="evidence" value="ECO:0007669"/>
    <property type="project" value="InterPro"/>
</dbReference>
<dbReference type="GO" id="GO:0001514">
    <property type="term" value="P:selenocysteine incorporation"/>
    <property type="evidence" value="ECO:0007669"/>
    <property type="project" value="TreeGrafter"/>
</dbReference>
<dbReference type="Gene3D" id="3.40.640.10">
    <property type="entry name" value="Type I PLP-dependent aspartate aminotransferase-like (Major domain)"/>
    <property type="match status" value="1"/>
</dbReference>
<dbReference type="InterPro" id="IPR015424">
    <property type="entry name" value="PyrdxlP-dep_Trfase"/>
</dbReference>
<dbReference type="InterPro" id="IPR015421">
    <property type="entry name" value="PyrdxlP-dep_Trfase_major"/>
</dbReference>
<dbReference type="InterPro" id="IPR019872">
    <property type="entry name" value="Sec-tRNA_Se_transferase"/>
</dbReference>
<dbReference type="InterPro" id="IPR008829">
    <property type="entry name" value="SepSecS/SepCysS"/>
</dbReference>
<dbReference type="NCBIfam" id="TIGR03531">
    <property type="entry name" value="selenium_SpcS"/>
    <property type="match status" value="1"/>
</dbReference>
<dbReference type="PANTHER" id="PTHR12944:SF2">
    <property type="entry name" value="O-PHOSPHOSERYL-TRNA(SEC) SELENIUM TRANSFERASE"/>
    <property type="match status" value="1"/>
</dbReference>
<dbReference type="PANTHER" id="PTHR12944">
    <property type="entry name" value="SOLUBLE LIVER ANTIGEN/LIVER PANCREAS ANTIGEN"/>
    <property type="match status" value="1"/>
</dbReference>
<dbReference type="Pfam" id="PF05889">
    <property type="entry name" value="SepSecS"/>
    <property type="match status" value="1"/>
</dbReference>
<dbReference type="PIRSF" id="PIRSF017689">
    <property type="entry name" value="SepSecS"/>
    <property type="match status" value="1"/>
</dbReference>
<dbReference type="SUPFAM" id="SSF53383">
    <property type="entry name" value="PLP-dependent transferases"/>
    <property type="match status" value="1"/>
</dbReference>
<organism>
    <name type="scientific">Methanopyrus kandleri (strain AV19 / DSM 6324 / JCM 9639 / NBRC 100938)</name>
    <dbReference type="NCBI Taxonomy" id="190192"/>
    <lineage>
        <taxon>Archaea</taxon>
        <taxon>Methanobacteriati</taxon>
        <taxon>Methanobacteriota</taxon>
        <taxon>Methanomada group</taxon>
        <taxon>Methanopyri</taxon>
        <taxon>Methanopyrales</taxon>
        <taxon>Methanopyraceae</taxon>
        <taxon>Methanopyrus</taxon>
    </lineage>
</organism>
<keyword id="KW-0648">Protein biosynthesis</keyword>
<keyword id="KW-0663">Pyridoxal phosphate</keyword>
<keyword id="KW-1185">Reference proteome</keyword>
<keyword id="KW-0694">RNA-binding</keyword>
<keyword id="KW-0711">Selenium</keyword>
<keyword id="KW-0808">Transferase</keyword>
<keyword id="KW-0820">tRNA-binding</keyword>
<name>SPCS_METKA</name>
<evidence type="ECO:0000250" key="1"/>
<evidence type="ECO:0000250" key="2">
    <source>
        <dbReference type="UniProtKB" id="Q6LZM9"/>
    </source>
</evidence>
<evidence type="ECO:0000250" key="3">
    <source>
        <dbReference type="UniProtKB" id="Q6P6M7"/>
    </source>
</evidence>
<evidence type="ECO:0000305" key="4"/>
<comment type="function">
    <text evidence="2">Converts O-phosphoseryl-tRNA(Sec) to selenocysteinyl-tRNA(Sec) required for selenoprotein biosynthesis.</text>
</comment>
<comment type="catalytic activity">
    <reaction evidence="2">
        <text>O-phospho-L-seryl-tRNA(Sec) + selenophosphate + H2O = L-selenocysteinyl-tRNA(Sec) + 2 phosphate</text>
        <dbReference type="Rhea" id="RHEA:25041"/>
        <dbReference type="Rhea" id="RHEA-COMP:9743"/>
        <dbReference type="Rhea" id="RHEA-COMP:9947"/>
        <dbReference type="ChEBI" id="CHEBI:15377"/>
        <dbReference type="ChEBI" id="CHEBI:16144"/>
        <dbReference type="ChEBI" id="CHEBI:43474"/>
        <dbReference type="ChEBI" id="CHEBI:78551"/>
        <dbReference type="ChEBI" id="CHEBI:78573"/>
        <dbReference type="EC" id="2.9.1.2"/>
    </reaction>
</comment>
<comment type="cofactor">
    <cofactor evidence="2">
        <name>pyridoxal 5'-phosphate</name>
        <dbReference type="ChEBI" id="CHEBI:597326"/>
    </cofactor>
</comment>
<comment type="pathway">
    <text evidence="2">Aminoacyl-tRNA biosynthesis; selenocysteinyl-tRNA(Sec) biosynthesis; selenocysteinyl-tRNA(Sec) from L-seryl-tRNA(Sec) (archaeal/eukaryal route): step 2/2.</text>
</comment>
<comment type="subunit">
    <text evidence="2">Homotetramer.</text>
</comment>
<comment type="similarity">
    <text evidence="4">Belongs to the SepSecS family.</text>
</comment>
<sequence length="431" mass="47589">MRGLIPDHMLERGRTVLDSYREPVERLLSERRMPEEGWPDDVIATFLWELSRMDTDKDPKAARIGEREARVASRLAEESVFGFCHGVGRSGTLVDPQPKAPGASIMYALTNRLVTDFLRRLGFRIEGAFVVPGATGLSIALCLSALGEGEEVIYPYAAHKSPIKAVRLAGFGMRVVDTEIEGDRIVVDPGDVEEALERSESPAAVLSTLTFFPPRSSDPLPEIAELCEEYGVPHVVNAAYGIQHEQYRDLLNRAIKRGRVDVVVSSTDKNLLTPVGGGIVYAPDEETLREVSRAYPGRASAAPVAHALISLLSLGMKGYRRLMRRQKECKALLDELLEDLEARRDDVRVLDVDNPIASAVAVEGHDPVDLAARLYVRRVTGPRGVRADDPFGTSRLRGYHSNYITINAAIGVREEDVKTAVERLERELEGE</sequence>
<accession>Q8TXK0</accession>
<gene>
    <name type="primary">spcS</name>
    <name type="ordered locus">MK0672</name>
</gene>
<reference key="1">
    <citation type="journal article" date="2002" name="Proc. Natl. Acad. Sci. U.S.A.">
        <title>The complete genome of hyperthermophile Methanopyrus kandleri AV19 and monophyly of archaeal methanogens.</title>
        <authorList>
            <person name="Slesarev A.I."/>
            <person name="Mezhevaya K.V."/>
            <person name="Makarova K.S."/>
            <person name="Polushin N.N."/>
            <person name="Shcherbinina O.V."/>
            <person name="Shakhova V.V."/>
            <person name="Belova G.I."/>
            <person name="Aravind L."/>
            <person name="Natale D.A."/>
            <person name="Rogozin I.B."/>
            <person name="Tatusov R.L."/>
            <person name="Wolf Y.I."/>
            <person name="Stetter K.O."/>
            <person name="Malykh A.G."/>
            <person name="Koonin E.V."/>
            <person name="Kozyavkin S.A."/>
        </authorList>
    </citation>
    <scope>NUCLEOTIDE SEQUENCE [LARGE SCALE GENOMIC DNA]</scope>
    <source>
        <strain>AV19 / DSM 6324 / JCM 9639 / NBRC 100938</strain>
    </source>
</reference>